<accession>Q8K9E1</accession>
<keyword id="KW-0030">Aminoacyl-tRNA synthetase</keyword>
<keyword id="KW-0067">ATP-binding</keyword>
<keyword id="KW-0963">Cytoplasm</keyword>
<keyword id="KW-0436">Ligase</keyword>
<keyword id="KW-0547">Nucleotide-binding</keyword>
<keyword id="KW-0648">Protein biosynthesis</keyword>
<gene>
    <name evidence="1" type="primary">glnS</name>
    <name type="ordered locus">BUsg_398</name>
</gene>
<evidence type="ECO:0000255" key="1">
    <source>
        <dbReference type="HAMAP-Rule" id="MF_00126"/>
    </source>
</evidence>
<evidence type="ECO:0000305" key="2"/>
<dbReference type="EC" id="6.1.1.18" evidence="1"/>
<dbReference type="EMBL" id="AE013218">
    <property type="protein sequence ID" value="AAM67949.1"/>
    <property type="status" value="ALT_INIT"/>
    <property type="molecule type" value="Genomic_DNA"/>
</dbReference>
<dbReference type="RefSeq" id="WP_044006058.1">
    <property type="nucleotide sequence ID" value="NC_004061.1"/>
</dbReference>
<dbReference type="SMR" id="Q8K9E1"/>
<dbReference type="STRING" id="198804.BUsg_398"/>
<dbReference type="GeneID" id="93003872"/>
<dbReference type="KEGG" id="bas:BUsg_398"/>
<dbReference type="eggNOG" id="COG0008">
    <property type="taxonomic scope" value="Bacteria"/>
</dbReference>
<dbReference type="HOGENOM" id="CLU_001882_2_3_6"/>
<dbReference type="Proteomes" id="UP000000416">
    <property type="component" value="Chromosome"/>
</dbReference>
<dbReference type="GO" id="GO:0005829">
    <property type="term" value="C:cytosol"/>
    <property type="evidence" value="ECO:0007669"/>
    <property type="project" value="TreeGrafter"/>
</dbReference>
<dbReference type="GO" id="GO:0005524">
    <property type="term" value="F:ATP binding"/>
    <property type="evidence" value="ECO:0007669"/>
    <property type="project" value="UniProtKB-UniRule"/>
</dbReference>
<dbReference type="GO" id="GO:0004819">
    <property type="term" value="F:glutamine-tRNA ligase activity"/>
    <property type="evidence" value="ECO:0007669"/>
    <property type="project" value="UniProtKB-UniRule"/>
</dbReference>
<dbReference type="GO" id="GO:0006425">
    <property type="term" value="P:glutaminyl-tRNA aminoacylation"/>
    <property type="evidence" value="ECO:0007669"/>
    <property type="project" value="InterPro"/>
</dbReference>
<dbReference type="GO" id="GO:0006424">
    <property type="term" value="P:glutamyl-tRNA aminoacylation"/>
    <property type="evidence" value="ECO:0007669"/>
    <property type="project" value="UniProtKB-UniRule"/>
</dbReference>
<dbReference type="FunFam" id="1.10.1160.10:FF:000001">
    <property type="entry name" value="Glutamine--tRNA ligase"/>
    <property type="match status" value="1"/>
</dbReference>
<dbReference type="FunFam" id="3.90.800.10:FF:000001">
    <property type="entry name" value="Glutamine--tRNA ligase"/>
    <property type="match status" value="1"/>
</dbReference>
<dbReference type="FunFam" id="3.40.50.620:FF:000037">
    <property type="entry name" value="Glutamine--tRNA ligase cytoplasmic"/>
    <property type="match status" value="1"/>
</dbReference>
<dbReference type="Gene3D" id="1.10.1160.10">
    <property type="entry name" value="Glutamyl-trna Synthetase, Domain 2"/>
    <property type="match status" value="1"/>
</dbReference>
<dbReference type="Gene3D" id="3.90.800.10">
    <property type="entry name" value="Glutamyl-tRNA Synthetase, Domain 3"/>
    <property type="match status" value="1"/>
</dbReference>
<dbReference type="Gene3D" id="3.40.50.620">
    <property type="entry name" value="HUPs"/>
    <property type="match status" value="1"/>
</dbReference>
<dbReference type="Gene3D" id="2.40.240.10">
    <property type="entry name" value="Ribosomal Protein L25, Chain P"/>
    <property type="match status" value="2"/>
</dbReference>
<dbReference type="HAMAP" id="MF_00126">
    <property type="entry name" value="Gln_tRNA_synth"/>
    <property type="match status" value="1"/>
</dbReference>
<dbReference type="InterPro" id="IPR001412">
    <property type="entry name" value="aa-tRNA-synth_I_CS"/>
</dbReference>
<dbReference type="InterPro" id="IPR004514">
    <property type="entry name" value="Gln-tRNA-synth"/>
</dbReference>
<dbReference type="InterPro" id="IPR050132">
    <property type="entry name" value="Gln/Glu-tRNA_Ligase"/>
</dbReference>
<dbReference type="InterPro" id="IPR022861">
    <property type="entry name" value="Gln_tRNA_ligase_bac"/>
</dbReference>
<dbReference type="InterPro" id="IPR000924">
    <property type="entry name" value="Glu/Gln-tRNA-synth"/>
</dbReference>
<dbReference type="InterPro" id="IPR020058">
    <property type="entry name" value="Glu/Gln-tRNA-synth_Ib_cat-dom"/>
</dbReference>
<dbReference type="InterPro" id="IPR020059">
    <property type="entry name" value="Glu/Gln-tRNA-synth_Ib_codon-bd"/>
</dbReference>
<dbReference type="InterPro" id="IPR020061">
    <property type="entry name" value="Glu_tRNA_lig_a-bdl"/>
</dbReference>
<dbReference type="InterPro" id="IPR020056">
    <property type="entry name" value="Rbsml_bL25/Gln-tRNA_synth_N"/>
</dbReference>
<dbReference type="InterPro" id="IPR011035">
    <property type="entry name" value="Ribosomal_bL25/Gln-tRNA_synth"/>
</dbReference>
<dbReference type="InterPro" id="IPR014729">
    <property type="entry name" value="Rossmann-like_a/b/a_fold"/>
</dbReference>
<dbReference type="InterPro" id="IPR049437">
    <property type="entry name" value="tRNA-synt_1c_C2"/>
</dbReference>
<dbReference type="NCBIfam" id="TIGR00440">
    <property type="entry name" value="glnS"/>
    <property type="match status" value="1"/>
</dbReference>
<dbReference type="NCBIfam" id="NF011291">
    <property type="entry name" value="PRK14703.1"/>
    <property type="match status" value="1"/>
</dbReference>
<dbReference type="PANTHER" id="PTHR43097:SF5">
    <property type="entry name" value="GLUTAMATE--TRNA LIGASE"/>
    <property type="match status" value="1"/>
</dbReference>
<dbReference type="PANTHER" id="PTHR43097">
    <property type="entry name" value="GLUTAMINE-TRNA LIGASE"/>
    <property type="match status" value="1"/>
</dbReference>
<dbReference type="Pfam" id="PF00749">
    <property type="entry name" value="tRNA-synt_1c"/>
    <property type="match status" value="1"/>
</dbReference>
<dbReference type="Pfam" id="PF03950">
    <property type="entry name" value="tRNA-synt_1c_C"/>
    <property type="match status" value="1"/>
</dbReference>
<dbReference type="Pfam" id="PF20974">
    <property type="entry name" value="tRNA-synt_1c_C2"/>
    <property type="match status" value="1"/>
</dbReference>
<dbReference type="PRINTS" id="PR00987">
    <property type="entry name" value="TRNASYNTHGLU"/>
</dbReference>
<dbReference type="SUPFAM" id="SSF52374">
    <property type="entry name" value="Nucleotidylyl transferase"/>
    <property type="match status" value="1"/>
</dbReference>
<dbReference type="SUPFAM" id="SSF50715">
    <property type="entry name" value="Ribosomal protein L25-like"/>
    <property type="match status" value="1"/>
</dbReference>
<dbReference type="PROSITE" id="PS00178">
    <property type="entry name" value="AA_TRNA_LIGASE_I"/>
    <property type="match status" value="1"/>
</dbReference>
<reference key="1">
    <citation type="journal article" date="2002" name="Science">
        <title>50 million years of genomic stasis in endosymbiotic bacteria.</title>
        <authorList>
            <person name="Tamas I."/>
            <person name="Klasson L."/>
            <person name="Canbaeck B."/>
            <person name="Naeslund A.K."/>
            <person name="Eriksson A.-S."/>
            <person name="Wernegreen J.J."/>
            <person name="Sandstroem J.P."/>
            <person name="Moran N.A."/>
            <person name="Andersson S.G.E."/>
        </authorList>
    </citation>
    <scope>NUCLEOTIDE SEQUENCE [LARGE SCALE GENOMIC DNA]</scope>
    <source>
        <strain>Sg</strain>
    </source>
</reference>
<proteinExistence type="inferred from homology"/>
<comment type="catalytic activity">
    <reaction evidence="1">
        <text>tRNA(Gln) + L-glutamine + ATP = L-glutaminyl-tRNA(Gln) + AMP + diphosphate</text>
        <dbReference type="Rhea" id="RHEA:20121"/>
        <dbReference type="Rhea" id="RHEA-COMP:9662"/>
        <dbReference type="Rhea" id="RHEA-COMP:9681"/>
        <dbReference type="ChEBI" id="CHEBI:30616"/>
        <dbReference type="ChEBI" id="CHEBI:33019"/>
        <dbReference type="ChEBI" id="CHEBI:58359"/>
        <dbReference type="ChEBI" id="CHEBI:78442"/>
        <dbReference type="ChEBI" id="CHEBI:78521"/>
        <dbReference type="ChEBI" id="CHEBI:456215"/>
        <dbReference type="EC" id="6.1.1.18"/>
    </reaction>
</comment>
<comment type="subunit">
    <text evidence="1">Monomer.</text>
</comment>
<comment type="subcellular location">
    <subcellularLocation>
        <location evidence="1">Cytoplasm</location>
    </subcellularLocation>
</comment>
<comment type="similarity">
    <text evidence="1">Belongs to the class-I aminoacyl-tRNA synthetase family.</text>
</comment>
<comment type="sequence caution" evidence="2">
    <conflict type="erroneous initiation">
        <sequence resource="EMBL-CDS" id="AAM67949"/>
    </conflict>
</comment>
<feature type="chain" id="PRO_0000195828" description="Glutamine--tRNA ligase">
    <location>
        <begin position="1"/>
        <end position="562"/>
    </location>
</feature>
<feature type="short sequence motif" description="'HIGH' region" evidence="1">
    <location>
        <begin position="35"/>
        <end position="45"/>
    </location>
</feature>
<feature type="short sequence motif" description="'KMSKS' region" evidence="1">
    <location>
        <begin position="269"/>
        <end position="273"/>
    </location>
</feature>
<feature type="binding site" evidence="1">
    <location>
        <begin position="36"/>
        <end position="38"/>
    </location>
    <ligand>
        <name>ATP</name>
        <dbReference type="ChEBI" id="CHEBI:30616"/>
    </ligand>
</feature>
<feature type="binding site" evidence="1">
    <location>
        <begin position="42"/>
        <end position="48"/>
    </location>
    <ligand>
        <name>ATP</name>
        <dbReference type="ChEBI" id="CHEBI:30616"/>
    </ligand>
</feature>
<feature type="binding site" evidence="1">
    <location>
        <position position="68"/>
    </location>
    <ligand>
        <name>L-glutamine</name>
        <dbReference type="ChEBI" id="CHEBI:58359"/>
    </ligand>
</feature>
<feature type="binding site" evidence="1">
    <location>
        <position position="213"/>
    </location>
    <ligand>
        <name>L-glutamine</name>
        <dbReference type="ChEBI" id="CHEBI:58359"/>
    </ligand>
</feature>
<feature type="binding site" evidence="1">
    <location>
        <position position="232"/>
    </location>
    <ligand>
        <name>ATP</name>
        <dbReference type="ChEBI" id="CHEBI:30616"/>
    </ligand>
</feature>
<feature type="binding site" evidence="1">
    <location>
        <begin position="262"/>
        <end position="263"/>
    </location>
    <ligand>
        <name>ATP</name>
        <dbReference type="ChEBI" id="CHEBI:30616"/>
    </ligand>
</feature>
<feature type="binding site" evidence="1">
    <location>
        <begin position="270"/>
        <end position="272"/>
    </location>
    <ligand>
        <name>ATP</name>
        <dbReference type="ChEBI" id="CHEBI:30616"/>
    </ligand>
</feature>
<organism>
    <name type="scientific">Buchnera aphidicola subsp. Schizaphis graminum (strain Sg)</name>
    <dbReference type="NCBI Taxonomy" id="198804"/>
    <lineage>
        <taxon>Bacteria</taxon>
        <taxon>Pseudomonadati</taxon>
        <taxon>Pseudomonadota</taxon>
        <taxon>Gammaproteobacteria</taxon>
        <taxon>Enterobacterales</taxon>
        <taxon>Erwiniaceae</taxon>
        <taxon>Buchnera</taxon>
    </lineage>
</organism>
<sequence length="562" mass="66769">MNNKIEKNDNNFIYKIINEDFKKNKNLLLHTRFPPEPNGYLHIGHAKSICLNFELANVYNGYCNLRFDDTNPVKENIKYINSIKNDIKWLGYQWHKKVRYSSEYFPILYEYAKELIQKGLAYVDELTKEEIREYRGTLSTVGKNSPYRNRSITENLKLFEKMKKGEFKEGEACLRAKINMSSSFIVMRDPVLYRIIFSTHHQTKKKWCIYPTYDFAHCLSDSIEGITHSFCTLEFQDNKNLYNWILKNTSIKHYSKQYEFSRLNLEYSILSKRKISILIEKKIVNGWDDPRILTISGLRKKGYTASSIRDFCHRIGITKQNNLIEFSMLEYCIRKELNKKAIRTMAVLEPIKIFLYNIDNDHEEKLIVPNHPKHLHLGTHEIIFTNTIYIEREDFKEKYDKKYKRLKIGEEVRLRYAYIIKAEKIEKDESGNIIKIICFCDINSLGKKPINRKNPAVIHWIAVKNSFPAKFKLYNQLFKIKNPDQEKNFLSYLNSNSLIVKNGFVEKKIAQKIIKKMSNNFIKLFFQFERTGYFCVDEVDSKENKLVFNRTVSLKDSWNLKK</sequence>
<protein>
    <recommendedName>
        <fullName evidence="1">Glutamine--tRNA ligase</fullName>
        <ecNumber evidence="1">6.1.1.18</ecNumber>
    </recommendedName>
    <alternativeName>
        <fullName evidence="1">Glutaminyl-tRNA synthetase</fullName>
        <shortName evidence="1">GlnRS</shortName>
    </alternativeName>
</protein>
<name>SYQ_BUCAP</name>